<dbReference type="EMBL" id="CP000110">
    <property type="protein sequence ID" value="ABB34141.1"/>
    <property type="molecule type" value="Genomic_DNA"/>
</dbReference>
<dbReference type="RefSeq" id="WP_006852039.1">
    <property type="nucleotide sequence ID" value="NC_007516.1"/>
</dbReference>
<dbReference type="SMR" id="Q3AMP1"/>
<dbReference type="STRING" id="110662.Syncc9605_0365"/>
<dbReference type="KEGG" id="syd:Syncc9605_0365"/>
<dbReference type="eggNOG" id="COG0198">
    <property type="taxonomic scope" value="Bacteria"/>
</dbReference>
<dbReference type="HOGENOM" id="CLU_093315_2_3_3"/>
<dbReference type="OrthoDB" id="9807419at2"/>
<dbReference type="GO" id="GO:1990904">
    <property type="term" value="C:ribonucleoprotein complex"/>
    <property type="evidence" value="ECO:0007669"/>
    <property type="project" value="UniProtKB-KW"/>
</dbReference>
<dbReference type="GO" id="GO:0005840">
    <property type="term" value="C:ribosome"/>
    <property type="evidence" value="ECO:0007669"/>
    <property type="project" value="UniProtKB-KW"/>
</dbReference>
<dbReference type="GO" id="GO:0019843">
    <property type="term" value="F:rRNA binding"/>
    <property type="evidence" value="ECO:0007669"/>
    <property type="project" value="UniProtKB-UniRule"/>
</dbReference>
<dbReference type="GO" id="GO:0003735">
    <property type="term" value="F:structural constituent of ribosome"/>
    <property type="evidence" value="ECO:0007669"/>
    <property type="project" value="InterPro"/>
</dbReference>
<dbReference type="GO" id="GO:0006412">
    <property type="term" value="P:translation"/>
    <property type="evidence" value="ECO:0007669"/>
    <property type="project" value="UniProtKB-UniRule"/>
</dbReference>
<dbReference type="CDD" id="cd06089">
    <property type="entry name" value="KOW_RPL26"/>
    <property type="match status" value="1"/>
</dbReference>
<dbReference type="Gene3D" id="2.30.30.30">
    <property type="match status" value="1"/>
</dbReference>
<dbReference type="HAMAP" id="MF_01326_B">
    <property type="entry name" value="Ribosomal_uL24_B"/>
    <property type="match status" value="1"/>
</dbReference>
<dbReference type="InterPro" id="IPR005824">
    <property type="entry name" value="KOW"/>
</dbReference>
<dbReference type="InterPro" id="IPR014722">
    <property type="entry name" value="Rib_uL2_dom2"/>
</dbReference>
<dbReference type="InterPro" id="IPR003256">
    <property type="entry name" value="Ribosomal_uL24"/>
</dbReference>
<dbReference type="InterPro" id="IPR005825">
    <property type="entry name" value="Ribosomal_uL24_CS"/>
</dbReference>
<dbReference type="InterPro" id="IPR041988">
    <property type="entry name" value="Ribosomal_uL24_KOW"/>
</dbReference>
<dbReference type="InterPro" id="IPR008991">
    <property type="entry name" value="Translation_prot_SH3-like_sf"/>
</dbReference>
<dbReference type="NCBIfam" id="TIGR01079">
    <property type="entry name" value="rplX_bact"/>
    <property type="match status" value="1"/>
</dbReference>
<dbReference type="PANTHER" id="PTHR12903">
    <property type="entry name" value="MITOCHONDRIAL RIBOSOMAL PROTEIN L24"/>
    <property type="match status" value="1"/>
</dbReference>
<dbReference type="Pfam" id="PF00467">
    <property type="entry name" value="KOW"/>
    <property type="match status" value="1"/>
</dbReference>
<dbReference type="Pfam" id="PF17136">
    <property type="entry name" value="ribosomal_L24"/>
    <property type="match status" value="1"/>
</dbReference>
<dbReference type="SMART" id="SM00739">
    <property type="entry name" value="KOW"/>
    <property type="match status" value="1"/>
</dbReference>
<dbReference type="SUPFAM" id="SSF50104">
    <property type="entry name" value="Translation proteins SH3-like domain"/>
    <property type="match status" value="1"/>
</dbReference>
<dbReference type="PROSITE" id="PS01108">
    <property type="entry name" value="RIBOSOMAL_L24"/>
    <property type="match status" value="1"/>
</dbReference>
<keyword id="KW-0687">Ribonucleoprotein</keyword>
<keyword id="KW-0689">Ribosomal protein</keyword>
<keyword id="KW-0694">RNA-binding</keyword>
<keyword id="KW-0699">rRNA-binding</keyword>
<organism>
    <name type="scientific">Synechococcus sp. (strain CC9605)</name>
    <dbReference type="NCBI Taxonomy" id="110662"/>
    <lineage>
        <taxon>Bacteria</taxon>
        <taxon>Bacillati</taxon>
        <taxon>Cyanobacteriota</taxon>
        <taxon>Cyanophyceae</taxon>
        <taxon>Synechococcales</taxon>
        <taxon>Synechococcaceae</taxon>
        <taxon>Synechococcus</taxon>
    </lineage>
</organism>
<protein>
    <recommendedName>
        <fullName evidence="1">Large ribosomal subunit protein uL24</fullName>
    </recommendedName>
    <alternativeName>
        <fullName evidence="2">50S ribosomal protein L24</fullName>
    </alternativeName>
</protein>
<proteinExistence type="inferred from homology"/>
<sequence>MATATTKAKATERIKMRIRKGDTVQVIAGKDKGKTGAVLRTLPNENRVVVEGVNMRTRHEKPTQEGETGRIVTEEASLHASNVMLYSTDKKVASRVEIVVEKDGTKKRRLKKTGEVLD</sequence>
<gene>
    <name evidence="1" type="primary">rplX</name>
    <name evidence="1" type="synonym">rpl24</name>
    <name type="ordered locus">Syncc9605_0365</name>
</gene>
<evidence type="ECO:0000255" key="1">
    <source>
        <dbReference type="HAMAP-Rule" id="MF_01326"/>
    </source>
</evidence>
<evidence type="ECO:0000305" key="2"/>
<accession>Q3AMP1</accession>
<name>RL24_SYNSC</name>
<reference key="1">
    <citation type="submission" date="2005-07" db="EMBL/GenBank/DDBJ databases">
        <title>Complete sequence of Synechococcus sp. CC9605.</title>
        <authorList>
            <consortium name="US DOE Joint Genome Institute"/>
            <person name="Copeland A."/>
            <person name="Lucas S."/>
            <person name="Lapidus A."/>
            <person name="Barry K."/>
            <person name="Detter J.C."/>
            <person name="Glavina T."/>
            <person name="Hammon N."/>
            <person name="Israni S."/>
            <person name="Pitluck S."/>
            <person name="Schmutz J."/>
            <person name="Martinez M."/>
            <person name="Larimer F."/>
            <person name="Land M."/>
            <person name="Kyrpides N."/>
            <person name="Ivanova N."/>
            <person name="Richardson P."/>
        </authorList>
    </citation>
    <scope>NUCLEOTIDE SEQUENCE [LARGE SCALE GENOMIC DNA]</scope>
    <source>
        <strain>CC9605</strain>
    </source>
</reference>
<comment type="function">
    <text evidence="1">One of two assembly initiator proteins, it binds directly to the 5'-end of the 23S rRNA, where it nucleates assembly of the 50S subunit.</text>
</comment>
<comment type="function">
    <text evidence="1">One of the proteins that surrounds the polypeptide exit tunnel on the outside of the subunit.</text>
</comment>
<comment type="subunit">
    <text evidence="1">Part of the 50S ribosomal subunit.</text>
</comment>
<comment type="similarity">
    <text evidence="1">Belongs to the universal ribosomal protein uL24 family.</text>
</comment>
<feature type="chain" id="PRO_0000241672" description="Large ribosomal subunit protein uL24">
    <location>
        <begin position="1"/>
        <end position="118"/>
    </location>
</feature>